<feature type="chain" id="PRO_0000122825" description="Protein RecA">
    <location>
        <begin position="1"/>
        <end position="398"/>
    </location>
</feature>
<feature type="region of interest" description="Disordered" evidence="2">
    <location>
        <begin position="351"/>
        <end position="398"/>
    </location>
</feature>
<feature type="compositionally biased region" description="Basic and acidic residues" evidence="2">
    <location>
        <begin position="354"/>
        <end position="365"/>
    </location>
</feature>
<feature type="compositionally biased region" description="Acidic residues" evidence="2">
    <location>
        <begin position="375"/>
        <end position="389"/>
    </location>
</feature>
<feature type="binding site" evidence="1">
    <location>
        <begin position="83"/>
        <end position="90"/>
    </location>
    <ligand>
        <name>ATP</name>
        <dbReference type="ChEBI" id="CHEBI:30616"/>
    </ligand>
</feature>
<feature type="sequence conflict" description="In Ref. 2; AAA73925." evidence="3" ref="2">
    <original>FIDV</original>
    <variation>LIEA</variation>
    <location>
        <begin position="109"/>
        <end position="112"/>
    </location>
</feature>
<feature type="sequence conflict" description="In Ref. 2; AAA73925." evidence="3" ref="2">
    <original>V</original>
    <variation>Q</variation>
    <location>
        <position position="119"/>
    </location>
</feature>
<feature type="sequence conflict" description="In Ref. 2; AAA73925." evidence="3" ref="2">
    <original>KN</original>
    <variation>TA</variation>
    <location>
        <begin position="122"/>
        <end position="123"/>
    </location>
</feature>
<feature type="sequence conflict" description="In Ref. 2; AAA73925." evidence="3" ref="2">
    <original>DIDSMLV</original>
    <variation>QINDLLL</variation>
    <location>
        <begin position="127"/>
        <end position="133"/>
    </location>
</feature>
<feature type="sequence conflict" description="In Ref. 2; AAA73925." evidence="3" ref="2">
    <original>S</original>
    <variation>T</variation>
    <location>
        <position position="138"/>
    </location>
</feature>
<feature type="sequence conflict" description="In Ref. 2; AAA73925." evidence="3" ref="2">
    <original>A</original>
    <variation>G</variation>
    <location>
        <position position="142"/>
    </location>
</feature>
<feature type="sequence conflict" description="In Ref. 2; AAA73925." evidence="3" ref="2">
    <original>E</original>
    <variation>D</variation>
    <location>
        <position position="147"/>
    </location>
</feature>
<feature type="sequence conflict" description="In Ref. 2; AAA73925." evidence="3" ref="2">
    <original>AR</original>
    <variation>IA</variation>
    <location>
        <begin position="150"/>
        <end position="151"/>
    </location>
</feature>
<feature type="sequence conflict" description="In Ref. 2; AAA73925." evidence="3" ref="2">
    <original>IDCIVI</original>
    <variation>VDIVVV</variation>
    <location>
        <begin position="155"/>
        <end position="160"/>
    </location>
</feature>
<feature type="sequence conflict" description="In Ref. 2; AAA73925." evidence="3" ref="2">
    <original>MVTK</original>
    <variation>LVPR</variation>
    <location>
        <begin position="166"/>
        <end position="169"/>
    </location>
</feature>
<feature type="sequence conflict" description="In Ref. 2; AAA73925." evidence="3" ref="2">
    <original>D</original>
    <variation>E</variation>
    <location>
        <position position="173"/>
    </location>
</feature>
<feature type="sequence conflict" description="In Ref. 2; AAA73925." evidence="3" ref="2">
    <original>QL</original>
    <variation>LQ</variation>
    <location>
        <begin position="183"/>
        <end position="184"/>
    </location>
</feature>
<feature type="sequence conflict" description="In Ref. 2; AAA73925." evidence="3" ref="2">
    <original>M</original>
    <variation>L</variation>
    <location>
        <position position="192"/>
    </location>
</feature>
<feature type="sequence conflict" description="In Ref. 2; AAA73925." evidence="3" ref="2">
    <original>TGVVSKSNTTCV</original>
    <variation>SGEINKTKTIAI</variation>
    <location>
        <begin position="196"/>
        <end position="207"/>
    </location>
</feature>
<feature type="sequence conflict" description="In Ref. 2; AAA73925." evidence="3" ref="2">
    <original>V</original>
    <variation>I</variation>
    <location>
        <position position="212"/>
    </location>
</feature>
<feature type="sequence conflict" description="In Ref. 2; AAA73925." evidence="3" ref="2">
    <original>I</original>
    <variation>V</variation>
    <location>
        <position position="216"/>
    </location>
</feature>
<feature type="sequence conflict" description="In Ref. 2; AAA73925." evidence="3" ref="2">
    <original>Y</original>
    <variation>F</variation>
    <location>
        <position position="220"/>
    </location>
</feature>
<dbReference type="EMBL" id="CP002403">
    <property type="protein sequence ID" value="ADU22697.1"/>
    <property type="molecule type" value="Genomic_DNA"/>
</dbReference>
<dbReference type="EMBL" id="U30293">
    <property type="protein sequence ID" value="AAA73925.1"/>
    <property type="molecule type" value="Genomic_DNA"/>
</dbReference>
<dbReference type="RefSeq" id="WP_013498854.1">
    <property type="nucleotide sequence ID" value="NC_014833.1"/>
</dbReference>
<dbReference type="SMR" id="P49985"/>
<dbReference type="STRING" id="697329.Rumal_2211"/>
<dbReference type="KEGG" id="ral:Rumal_2211"/>
<dbReference type="eggNOG" id="COG0468">
    <property type="taxonomic scope" value="Bacteria"/>
</dbReference>
<dbReference type="HOGENOM" id="CLU_040469_3_2_9"/>
<dbReference type="OrthoDB" id="9776733at2"/>
<dbReference type="Proteomes" id="UP000006919">
    <property type="component" value="Chromosome"/>
</dbReference>
<dbReference type="GO" id="GO:0005829">
    <property type="term" value="C:cytosol"/>
    <property type="evidence" value="ECO:0007669"/>
    <property type="project" value="TreeGrafter"/>
</dbReference>
<dbReference type="GO" id="GO:0005524">
    <property type="term" value="F:ATP binding"/>
    <property type="evidence" value="ECO:0007669"/>
    <property type="project" value="UniProtKB-UniRule"/>
</dbReference>
<dbReference type="GO" id="GO:0016887">
    <property type="term" value="F:ATP hydrolysis activity"/>
    <property type="evidence" value="ECO:0007669"/>
    <property type="project" value="InterPro"/>
</dbReference>
<dbReference type="GO" id="GO:0140664">
    <property type="term" value="F:ATP-dependent DNA damage sensor activity"/>
    <property type="evidence" value="ECO:0007669"/>
    <property type="project" value="InterPro"/>
</dbReference>
<dbReference type="GO" id="GO:0003684">
    <property type="term" value="F:damaged DNA binding"/>
    <property type="evidence" value="ECO:0007669"/>
    <property type="project" value="UniProtKB-UniRule"/>
</dbReference>
<dbReference type="GO" id="GO:0003697">
    <property type="term" value="F:single-stranded DNA binding"/>
    <property type="evidence" value="ECO:0007669"/>
    <property type="project" value="UniProtKB-UniRule"/>
</dbReference>
<dbReference type="GO" id="GO:0006310">
    <property type="term" value="P:DNA recombination"/>
    <property type="evidence" value="ECO:0007669"/>
    <property type="project" value="UniProtKB-UniRule"/>
</dbReference>
<dbReference type="GO" id="GO:0006281">
    <property type="term" value="P:DNA repair"/>
    <property type="evidence" value="ECO:0007669"/>
    <property type="project" value="UniProtKB-UniRule"/>
</dbReference>
<dbReference type="GO" id="GO:0009432">
    <property type="term" value="P:SOS response"/>
    <property type="evidence" value="ECO:0007669"/>
    <property type="project" value="UniProtKB-UniRule"/>
</dbReference>
<dbReference type="CDD" id="cd00983">
    <property type="entry name" value="RecA"/>
    <property type="match status" value="1"/>
</dbReference>
<dbReference type="FunFam" id="3.40.50.300:FF:000087">
    <property type="entry name" value="Recombinase RecA"/>
    <property type="match status" value="1"/>
</dbReference>
<dbReference type="Gene3D" id="3.40.50.300">
    <property type="entry name" value="P-loop containing nucleotide triphosphate hydrolases"/>
    <property type="match status" value="1"/>
</dbReference>
<dbReference type="HAMAP" id="MF_00268">
    <property type="entry name" value="RecA"/>
    <property type="match status" value="1"/>
</dbReference>
<dbReference type="InterPro" id="IPR003593">
    <property type="entry name" value="AAA+_ATPase"/>
</dbReference>
<dbReference type="InterPro" id="IPR013765">
    <property type="entry name" value="DNA_recomb/repair_RecA"/>
</dbReference>
<dbReference type="InterPro" id="IPR020584">
    <property type="entry name" value="DNA_recomb/repair_RecA_CS"/>
</dbReference>
<dbReference type="InterPro" id="IPR027417">
    <property type="entry name" value="P-loop_NTPase"/>
</dbReference>
<dbReference type="InterPro" id="IPR049261">
    <property type="entry name" value="RecA-like_C"/>
</dbReference>
<dbReference type="InterPro" id="IPR049428">
    <property type="entry name" value="RecA-like_N"/>
</dbReference>
<dbReference type="InterPro" id="IPR020588">
    <property type="entry name" value="RecA_ATP-bd"/>
</dbReference>
<dbReference type="InterPro" id="IPR023400">
    <property type="entry name" value="RecA_C_sf"/>
</dbReference>
<dbReference type="InterPro" id="IPR020587">
    <property type="entry name" value="RecA_monomer-monomer_interface"/>
</dbReference>
<dbReference type="NCBIfam" id="TIGR02012">
    <property type="entry name" value="tigrfam_recA"/>
    <property type="match status" value="1"/>
</dbReference>
<dbReference type="PANTHER" id="PTHR45900:SF1">
    <property type="entry name" value="MITOCHONDRIAL DNA REPAIR PROTEIN RECA HOMOLOG-RELATED"/>
    <property type="match status" value="1"/>
</dbReference>
<dbReference type="PANTHER" id="PTHR45900">
    <property type="entry name" value="RECA"/>
    <property type="match status" value="1"/>
</dbReference>
<dbReference type="Pfam" id="PF00154">
    <property type="entry name" value="RecA"/>
    <property type="match status" value="1"/>
</dbReference>
<dbReference type="Pfam" id="PF21096">
    <property type="entry name" value="RecA_C"/>
    <property type="match status" value="1"/>
</dbReference>
<dbReference type="PRINTS" id="PR00142">
    <property type="entry name" value="RECA"/>
</dbReference>
<dbReference type="SMART" id="SM00382">
    <property type="entry name" value="AAA"/>
    <property type="match status" value="1"/>
</dbReference>
<dbReference type="SUPFAM" id="SSF52540">
    <property type="entry name" value="P-loop containing nucleoside triphosphate hydrolases"/>
    <property type="match status" value="1"/>
</dbReference>
<dbReference type="SUPFAM" id="SSF54752">
    <property type="entry name" value="RecA protein, C-terminal domain"/>
    <property type="match status" value="1"/>
</dbReference>
<dbReference type="PROSITE" id="PS00321">
    <property type="entry name" value="RECA_1"/>
    <property type="match status" value="1"/>
</dbReference>
<dbReference type="PROSITE" id="PS50162">
    <property type="entry name" value="RECA_2"/>
    <property type="match status" value="1"/>
</dbReference>
<dbReference type="PROSITE" id="PS50163">
    <property type="entry name" value="RECA_3"/>
    <property type="match status" value="1"/>
</dbReference>
<protein>
    <recommendedName>
        <fullName evidence="1">Protein RecA</fullName>
    </recommendedName>
    <alternativeName>
        <fullName evidence="1">Recombinase A</fullName>
    </alternativeName>
</protein>
<organism>
    <name type="scientific">Ruminococcus albus (strain ATCC 27210 / DSM 20455 / JCM 14654 / NCDO 2250 / 7)</name>
    <dbReference type="NCBI Taxonomy" id="697329"/>
    <lineage>
        <taxon>Bacteria</taxon>
        <taxon>Bacillati</taxon>
        <taxon>Bacillota</taxon>
        <taxon>Clostridia</taxon>
        <taxon>Eubacteriales</taxon>
        <taxon>Oscillospiraceae</taxon>
        <taxon>Ruminococcus</taxon>
    </lineage>
</organism>
<evidence type="ECO:0000255" key="1">
    <source>
        <dbReference type="HAMAP-Rule" id="MF_00268"/>
    </source>
</evidence>
<evidence type="ECO:0000256" key="2">
    <source>
        <dbReference type="SAM" id="MobiDB-lite"/>
    </source>
</evidence>
<evidence type="ECO:0000305" key="3"/>
<name>RECA_RUMA7</name>
<comment type="function">
    <text evidence="1">Can catalyze the hydrolysis of ATP in the presence of single-stranded DNA, the ATP-dependent uptake of single-stranded DNA by duplex DNA, and the ATP-dependent hybridization of homologous single-stranded DNAs. It interacts with LexA causing its activation and leading to its autocatalytic cleavage.</text>
</comment>
<comment type="subcellular location">
    <subcellularLocation>
        <location evidence="1">Cytoplasm</location>
    </subcellularLocation>
</comment>
<comment type="similarity">
    <text evidence="1">Belongs to the RecA family.</text>
</comment>
<comment type="caution">
    <text evidence="3">Sequence (AAA73925.1) highly divergent from genome sequence. It could originate from another bacterial species.</text>
</comment>
<gene>
    <name evidence="1" type="primary">recA</name>
    <name type="ordered locus">Rumal_2211</name>
</gene>
<accession>P49985</accession>
<accession>E6UC75</accession>
<reference key="1">
    <citation type="journal article" date="2011" name="J. Bacteriol.">
        <title>Complete genome of the cellulolytic ruminal bacterium Ruminococcus albus 7.</title>
        <authorList>
            <person name="Suen G."/>
            <person name="Stevenson D.M."/>
            <person name="Bruce D.C."/>
            <person name="Chertkov O."/>
            <person name="Copeland A."/>
            <person name="Cheng J.F."/>
            <person name="Detter C."/>
            <person name="Detter J.C."/>
            <person name="Goodwin L.A."/>
            <person name="Han C.S."/>
            <person name="Hauser L.J."/>
            <person name="Ivanova N.N."/>
            <person name="Kyrpides N.C."/>
            <person name="Land M.L."/>
            <person name="Lapidus A."/>
            <person name="Lucas S."/>
            <person name="Ovchinnikova G."/>
            <person name="Pitluck S."/>
            <person name="Tapia R."/>
            <person name="Woyke T."/>
            <person name="Boyum J."/>
            <person name="Mead D."/>
            <person name="Weimer P.J."/>
        </authorList>
    </citation>
    <scope>NUCLEOTIDE SEQUENCE [LARGE SCALE GENOMIC DNA]</scope>
    <source>
        <strain>ATCC 27210 / DSM 20455 / JCM 14654 / NCDO 2250 / 7</strain>
    </source>
</reference>
<reference key="2">
    <citation type="submission" date="1995-06" db="EMBL/GenBank/DDBJ databases">
        <authorList>
            <person name="Aminov R.I."/>
            <person name="Nagamine T."/>
            <person name="Ogata K."/>
            <person name="Benno Y."/>
        </authorList>
    </citation>
    <scope>NUCLEOTIDE SEQUENCE [GENOMIC DNA] OF 109-229</scope>
    <source>
        <strain>ATCC 27210 / DSM 20455 / JCM 14654 / NCDO 2250 / 7</strain>
    </source>
</reference>
<proteinExistence type="inferred from homology"/>
<keyword id="KW-0067">ATP-binding</keyword>
<keyword id="KW-0963">Cytoplasm</keyword>
<keyword id="KW-0227">DNA damage</keyword>
<keyword id="KW-0233">DNA recombination</keyword>
<keyword id="KW-0234">DNA repair</keyword>
<keyword id="KW-0238">DNA-binding</keyword>
<keyword id="KW-0547">Nucleotide-binding</keyword>
<keyword id="KW-0742">SOS response</keyword>
<sequence length="398" mass="42820">MAIDKKKKEKDVKVHNITDAEEKKKALETAIAFIEKQFGKGAIMKLGDARAMDVEAIPTGSMMLDMALGIGGVPRGRIIEIYGPESSGKTTVALHIIAETQKMGGEVAFIDVEHALDPVYAKNLGVDIDSMLVSQPDSGEQALEIAEALARSGAIDCIVIDSVAAMVTKAEIDGEMGDTHVGQLARLMSQAMRKLTGVVSKSNTTCVFINQVREKIGVMYGNPETTPGGRALKFYASVRIEVRRGEQIKDGGEVLGNRTKCKVVKNKVAPPFKECEFDIMYGKGISRVGEVLDTAVDLGIVKKGGAWFSYEDYKLGQGRDNSKQFLLDHPDIMAEIENKIKASSAEMIAAAGQKNDKKSKLEEKANAGAGISEASEPDSSAEEDFEEFAPIDIGSLGE</sequence>